<feature type="chain" id="PRO_0000249531" description="Ubiquitin carboxyl-terminal hydrolase 54">
    <location>
        <begin position="1"/>
        <end position="1588"/>
    </location>
</feature>
<feature type="domain" description="USP" evidence="4">
    <location>
        <begin position="31"/>
        <end position="352"/>
    </location>
</feature>
<feature type="region of interest" description="Disordered" evidence="5">
    <location>
        <begin position="382"/>
        <end position="519"/>
    </location>
</feature>
<feature type="region of interest" description="Disordered" evidence="5">
    <location>
        <begin position="555"/>
        <end position="577"/>
    </location>
</feature>
<feature type="region of interest" description="Disordered" evidence="5">
    <location>
        <begin position="601"/>
        <end position="624"/>
    </location>
</feature>
<feature type="region of interest" description="Disordered" evidence="5">
    <location>
        <begin position="801"/>
        <end position="834"/>
    </location>
</feature>
<feature type="region of interest" description="Disordered" evidence="5">
    <location>
        <begin position="1089"/>
        <end position="1182"/>
    </location>
</feature>
<feature type="region of interest" description="Disordered" evidence="5">
    <location>
        <begin position="1221"/>
        <end position="1242"/>
    </location>
</feature>
<feature type="region of interest" description="Disordered" evidence="5">
    <location>
        <begin position="1491"/>
        <end position="1561"/>
    </location>
</feature>
<feature type="coiled-coil region" evidence="3">
    <location>
        <begin position="682"/>
        <end position="712"/>
    </location>
</feature>
<feature type="compositionally biased region" description="Basic and acidic residues" evidence="5">
    <location>
        <begin position="382"/>
        <end position="391"/>
    </location>
</feature>
<feature type="compositionally biased region" description="Basic and acidic residues" evidence="5">
    <location>
        <begin position="424"/>
        <end position="434"/>
    </location>
</feature>
<feature type="compositionally biased region" description="Polar residues" evidence="5">
    <location>
        <begin position="453"/>
        <end position="471"/>
    </location>
</feature>
<feature type="compositionally biased region" description="Low complexity" evidence="5">
    <location>
        <begin position="499"/>
        <end position="513"/>
    </location>
</feature>
<feature type="compositionally biased region" description="Basic and acidic residues" evidence="5">
    <location>
        <begin position="555"/>
        <end position="572"/>
    </location>
</feature>
<feature type="compositionally biased region" description="Low complexity" evidence="5">
    <location>
        <begin position="601"/>
        <end position="616"/>
    </location>
</feature>
<feature type="compositionally biased region" description="Low complexity" evidence="5">
    <location>
        <begin position="808"/>
        <end position="826"/>
    </location>
</feature>
<feature type="compositionally biased region" description="Basic and acidic residues" evidence="5">
    <location>
        <begin position="1126"/>
        <end position="1147"/>
    </location>
</feature>
<feature type="compositionally biased region" description="Polar residues" evidence="5">
    <location>
        <begin position="1510"/>
        <end position="1524"/>
    </location>
</feature>
<feature type="compositionally biased region" description="Basic and acidic residues" evidence="5">
    <location>
        <begin position="1536"/>
        <end position="1547"/>
    </location>
</feature>
<feature type="active site" description="Nucleophile" evidence="4">
    <location>
        <position position="42"/>
    </location>
</feature>
<feature type="active site" description="Proton acceptor" evidence="4">
    <location>
        <position position="302"/>
    </location>
</feature>
<feature type="binding site" evidence="2">
    <location>
        <position position="67"/>
    </location>
    <ligand>
        <name>Zn(2+)</name>
        <dbReference type="ChEBI" id="CHEBI:29105"/>
        <label>1</label>
    </ligand>
</feature>
<feature type="binding site" evidence="2">
    <location>
        <position position="69"/>
    </location>
    <ligand>
        <name>Zn(2+)</name>
        <dbReference type="ChEBI" id="CHEBI:29105"/>
        <label>1</label>
    </ligand>
</feature>
<feature type="binding site" evidence="2">
    <location>
        <position position="74"/>
    </location>
    <ligand>
        <name>Zn(2+)</name>
        <dbReference type="ChEBI" id="CHEBI:29105"/>
        <label>1</label>
    </ligand>
</feature>
<feature type="binding site" evidence="2">
    <location>
        <position position="77"/>
    </location>
    <ligand>
        <name>Zn(2+)</name>
        <dbReference type="ChEBI" id="CHEBI:29105"/>
        <label>1</label>
    </ligand>
</feature>
<feature type="binding site" evidence="2">
    <location>
        <position position="133"/>
    </location>
    <ligand>
        <name>Zn(2+)</name>
        <dbReference type="ChEBI" id="CHEBI:29105"/>
        <label>2</label>
    </ligand>
</feature>
<feature type="binding site" evidence="2">
    <location>
        <position position="145"/>
    </location>
    <ligand>
        <name>Zn(2+)</name>
        <dbReference type="ChEBI" id="CHEBI:29105"/>
        <label>2</label>
    </ligand>
</feature>
<feature type="binding site" evidence="2">
    <location>
        <position position="150"/>
    </location>
    <ligand>
        <name>Zn(2+)</name>
        <dbReference type="ChEBI" id="CHEBI:29105"/>
        <label>2</label>
    </ligand>
</feature>
<feature type="binding site" evidence="2">
    <location>
        <position position="153"/>
    </location>
    <ligand>
        <name>Zn(2+)</name>
        <dbReference type="ChEBI" id="CHEBI:29105"/>
        <label>2</label>
    </ligand>
</feature>
<feature type="binding site" evidence="2">
    <location>
        <position position="166"/>
    </location>
    <ligand>
        <name>Zn(2+)</name>
        <dbReference type="ChEBI" id="CHEBI:29105"/>
        <label>3</label>
    </ligand>
</feature>
<feature type="binding site" evidence="2">
    <location>
        <position position="169"/>
    </location>
    <ligand>
        <name>Zn(2+)</name>
        <dbReference type="ChEBI" id="CHEBI:29105"/>
        <label>3</label>
    </ligand>
</feature>
<feature type="binding site" evidence="2">
    <location>
        <position position="225"/>
    </location>
    <ligand>
        <name>Zn(2+)</name>
        <dbReference type="ChEBI" id="CHEBI:29105"/>
        <label>3</label>
    </ligand>
</feature>
<feature type="binding site" evidence="2">
    <location>
        <position position="229"/>
    </location>
    <ligand>
        <name>Zn(2+)</name>
        <dbReference type="ChEBI" id="CHEBI:29105"/>
        <label>3</label>
    </ligand>
</feature>
<feature type="modified residue" description="Omega-N-methylarginine" evidence="9">
    <location>
        <position position="12"/>
    </location>
</feature>
<feature type="modified residue" description="Phosphoserine" evidence="1">
    <location>
        <position position="424"/>
    </location>
</feature>
<feature type="modified residue" description="Phosphoserine" evidence="2">
    <location>
        <position position="613"/>
    </location>
</feature>
<feature type="modified residue" description="Phosphoserine" evidence="8">
    <location>
        <position position="616"/>
    </location>
</feature>
<feature type="modified residue" description="Phosphoserine" evidence="1">
    <location>
        <position position="1138"/>
    </location>
</feature>
<feature type="splice variant" id="VSP_020488" description="In isoform 2." evidence="6">
    <location>
        <begin position="1"/>
        <end position="69"/>
    </location>
</feature>
<feature type="splice variant" id="VSP_035679" description="In isoform 2 and isoform 3." evidence="6">
    <original>HLTDSECNQKHTSKKGSLVE</original>
    <variation>EQPSSPTPPYSQMVGSHTQG</variation>
    <location>
        <begin position="383"/>
        <end position="402"/>
    </location>
</feature>
<feature type="splice variant" id="VSP_035680" description="In isoform 2 and isoform 3." evidence="6">
    <location>
        <begin position="403"/>
        <end position="1588"/>
    </location>
</feature>
<feature type="sequence conflict" description="In Ref. 3; AAH66166/AAH66175." evidence="7" ref="3">
    <original>G</original>
    <variation>D</variation>
    <location>
        <position position="925"/>
    </location>
</feature>
<feature type="sequence conflict" description="In Ref. 3; AAI17845." evidence="7" ref="3">
    <original>R</original>
    <variation>G</variation>
    <location>
        <position position="1288"/>
    </location>
</feature>
<feature type="sequence conflict" description="In Ref. 1; BAB31805." evidence="7" ref="1">
    <original>L</original>
    <variation>V</variation>
    <location>
        <position position="1476"/>
    </location>
</feature>
<feature type="sequence conflict" description="In Ref. 3; AAH66166/AAH66175." evidence="7" ref="3">
    <original>G</original>
    <variation>E</variation>
    <location>
        <position position="1574"/>
    </location>
</feature>
<reference key="1">
    <citation type="journal article" date="2005" name="Science">
        <title>The transcriptional landscape of the mammalian genome.</title>
        <authorList>
            <person name="Carninci P."/>
            <person name="Kasukawa T."/>
            <person name="Katayama S."/>
            <person name="Gough J."/>
            <person name="Frith M.C."/>
            <person name="Maeda N."/>
            <person name="Oyama R."/>
            <person name="Ravasi T."/>
            <person name="Lenhard B."/>
            <person name="Wells C."/>
            <person name="Kodzius R."/>
            <person name="Shimokawa K."/>
            <person name="Bajic V.B."/>
            <person name="Brenner S.E."/>
            <person name="Batalov S."/>
            <person name="Forrest A.R."/>
            <person name="Zavolan M."/>
            <person name="Davis M.J."/>
            <person name="Wilming L.G."/>
            <person name="Aidinis V."/>
            <person name="Allen J.E."/>
            <person name="Ambesi-Impiombato A."/>
            <person name="Apweiler R."/>
            <person name="Aturaliya R.N."/>
            <person name="Bailey T.L."/>
            <person name="Bansal M."/>
            <person name="Baxter L."/>
            <person name="Beisel K.W."/>
            <person name="Bersano T."/>
            <person name="Bono H."/>
            <person name="Chalk A.M."/>
            <person name="Chiu K.P."/>
            <person name="Choudhary V."/>
            <person name="Christoffels A."/>
            <person name="Clutterbuck D.R."/>
            <person name="Crowe M.L."/>
            <person name="Dalla E."/>
            <person name="Dalrymple B.P."/>
            <person name="de Bono B."/>
            <person name="Della Gatta G."/>
            <person name="di Bernardo D."/>
            <person name="Down T."/>
            <person name="Engstrom P."/>
            <person name="Fagiolini M."/>
            <person name="Faulkner G."/>
            <person name="Fletcher C.F."/>
            <person name="Fukushima T."/>
            <person name="Furuno M."/>
            <person name="Futaki S."/>
            <person name="Gariboldi M."/>
            <person name="Georgii-Hemming P."/>
            <person name="Gingeras T.R."/>
            <person name="Gojobori T."/>
            <person name="Green R.E."/>
            <person name="Gustincich S."/>
            <person name="Harbers M."/>
            <person name="Hayashi Y."/>
            <person name="Hensch T.K."/>
            <person name="Hirokawa N."/>
            <person name="Hill D."/>
            <person name="Huminiecki L."/>
            <person name="Iacono M."/>
            <person name="Ikeo K."/>
            <person name="Iwama A."/>
            <person name="Ishikawa T."/>
            <person name="Jakt M."/>
            <person name="Kanapin A."/>
            <person name="Katoh M."/>
            <person name="Kawasawa Y."/>
            <person name="Kelso J."/>
            <person name="Kitamura H."/>
            <person name="Kitano H."/>
            <person name="Kollias G."/>
            <person name="Krishnan S.P."/>
            <person name="Kruger A."/>
            <person name="Kummerfeld S.K."/>
            <person name="Kurochkin I.V."/>
            <person name="Lareau L.F."/>
            <person name="Lazarevic D."/>
            <person name="Lipovich L."/>
            <person name="Liu J."/>
            <person name="Liuni S."/>
            <person name="McWilliam S."/>
            <person name="Madan Babu M."/>
            <person name="Madera M."/>
            <person name="Marchionni L."/>
            <person name="Matsuda H."/>
            <person name="Matsuzawa S."/>
            <person name="Miki H."/>
            <person name="Mignone F."/>
            <person name="Miyake S."/>
            <person name="Morris K."/>
            <person name="Mottagui-Tabar S."/>
            <person name="Mulder N."/>
            <person name="Nakano N."/>
            <person name="Nakauchi H."/>
            <person name="Ng P."/>
            <person name="Nilsson R."/>
            <person name="Nishiguchi S."/>
            <person name="Nishikawa S."/>
            <person name="Nori F."/>
            <person name="Ohara O."/>
            <person name="Okazaki Y."/>
            <person name="Orlando V."/>
            <person name="Pang K.C."/>
            <person name="Pavan W.J."/>
            <person name="Pavesi G."/>
            <person name="Pesole G."/>
            <person name="Petrovsky N."/>
            <person name="Piazza S."/>
            <person name="Reed J."/>
            <person name="Reid J.F."/>
            <person name="Ring B.Z."/>
            <person name="Ringwald M."/>
            <person name="Rost B."/>
            <person name="Ruan Y."/>
            <person name="Salzberg S.L."/>
            <person name="Sandelin A."/>
            <person name="Schneider C."/>
            <person name="Schoenbach C."/>
            <person name="Sekiguchi K."/>
            <person name="Semple C.A."/>
            <person name="Seno S."/>
            <person name="Sessa L."/>
            <person name="Sheng Y."/>
            <person name="Shibata Y."/>
            <person name="Shimada H."/>
            <person name="Shimada K."/>
            <person name="Silva D."/>
            <person name="Sinclair B."/>
            <person name="Sperling S."/>
            <person name="Stupka E."/>
            <person name="Sugiura K."/>
            <person name="Sultana R."/>
            <person name="Takenaka Y."/>
            <person name="Taki K."/>
            <person name="Tammoja K."/>
            <person name="Tan S.L."/>
            <person name="Tang S."/>
            <person name="Taylor M.S."/>
            <person name="Tegner J."/>
            <person name="Teichmann S.A."/>
            <person name="Ueda H.R."/>
            <person name="van Nimwegen E."/>
            <person name="Verardo R."/>
            <person name="Wei C.L."/>
            <person name="Yagi K."/>
            <person name="Yamanishi H."/>
            <person name="Zabarovsky E."/>
            <person name="Zhu S."/>
            <person name="Zimmer A."/>
            <person name="Hide W."/>
            <person name="Bult C."/>
            <person name="Grimmond S.M."/>
            <person name="Teasdale R.D."/>
            <person name="Liu E.T."/>
            <person name="Brusic V."/>
            <person name="Quackenbush J."/>
            <person name="Wahlestedt C."/>
            <person name="Mattick J.S."/>
            <person name="Hume D.A."/>
            <person name="Kai C."/>
            <person name="Sasaki D."/>
            <person name="Tomaru Y."/>
            <person name="Fukuda S."/>
            <person name="Kanamori-Katayama M."/>
            <person name="Suzuki M."/>
            <person name="Aoki J."/>
            <person name="Arakawa T."/>
            <person name="Iida J."/>
            <person name="Imamura K."/>
            <person name="Itoh M."/>
            <person name="Kato T."/>
            <person name="Kawaji H."/>
            <person name="Kawagashira N."/>
            <person name="Kawashima T."/>
            <person name="Kojima M."/>
            <person name="Kondo S."/>
            <person name="Konno H."/>
            <person name="Nakano K."/>
            <person name="Ninomiya N."/>
            <person name="Nishio T."/>
            <person name="Okada M."/>
            <person name="Plessy C."/>
            <person name="Shibata K."/>
            <person name="Shiraki T."/>
            <person name="Suzuki S."/>
            <person name="Tagami M."/>
            <person name="Waki K."/>
            <person name="Watahiki A."/>
            <person name="Okamura-Oho Y."/>
            <person name="Suzuki H."/>
            <person name="Kawai J."/>
            <person name="Hayashizaki Y."/>
        </authorList>
    </citation>
    <scope>NUCLEOTIDE SEQUENCE [LARGE SCALE MRNA] (ISOFORMS 2 AND 3)</scope>
    <scope>NUCLEOTIDE SEQUENCE [LARGE SCALE MRNA] OF 1026-1588 (ISOFORM 1)</scope>
    <source>
        <strain>C57BL/6J</strain>
        <tissue>Corpus striatum</tissue>
        <tissue>Testis</tissue>
        <tissue>Vagina</tissue>
    </source>
</reference>
<reference key="2">
    <citation type="journal article" date="2009" name="PLoS Biol.">
        <title>Lineage-specific biology revealed by a finished genome assembly of the mouse.</title>
        <authorList>
            <person name="Church D.M."/>
            <person name="Goodstadt L."/>
            <person name="Hillier L.W."/>
            <person name="Zody M.C."/>
            <person name="Goldstein S."/>
            <person name="She X."/>
            <person name="Bult C.J."/>
            <person name="Agarwala R."/>
            <person name="Cherry J.L."/>
            <person name="DiCuccio M."/>
            <person name="Hlavina W."/>
            <person name="Kapustin Y."/>
            <person name="Meric P."/>
            <person name="Maglott D."/>
            <person name="Birtle Z."/>
            <person name="Marques A.C."/>
            <person name="Graves T."/>
            <person name="Zhou S."/>
            <person name="Teague B."/>
            <person name="Potamousis K."/>
            <person name="Churas C."/>
            <person name="Place M."/>
            <person name="Herschleb J."/>
            <person name="Runnheim R."/>
            <person name="Forrest D."/>
            <person name="Amos-Landgraf J."/>
            <person name="Schwartz D.C."/>
            <person name="Cheng Z."/>
            <person name="Lindblad-Toh K."/>
            <person name="Eichler E.E."/>
            <person name="Ponting C.P."/>
        </authorList>
    </citation>
    <scope>NUCLEOTIDE SEQUENCE [LARGE SCALE GENOMIC DNA]</scope>
    <source>
        <strain>C57BL/6J</strain>
    </source>
</reference>
<reference key="3">
    <citation type="journal article" date="2004" name="Genome Res.">
        <title>The status, quality, and expansion of the NIH full-length cDNA project: the Mammalian Gene Collection (MGC).</title>
        <authorList>
            <consortium name="The MGC Project Team"/>
        </authorList>
    </citation>
    <scope>NUCLEOTIDE SEQUENCE [LARGE SCALE MRNA] OF 918-1588 (ISOFORM 1)</scope>
    <source>
        <strain>CD-1</strain>
        <tissue>Neural stem cell</tissue>
    </source>
</reference>
<reference key="4">
    <citation type="journal article" date="2010" name="Cell">
        <title>A tissue-specific atlas of mouse protein phosphorylation and expression.</title>
        <authorList>
            <person name="Huttlin E.L."/>
            <person name="Jedrychowski M.P."/>
            <person name="Elias J.E."/>
            <person name="Goswami T."/>
            <person name="Rad R."/>
            <person name="Beausoleil S.A."/>
            <person name="Villen J."/>
            <person name="Haas W."/>
            <person name="Sowa M.E."/>
            <person name="Gygi S.P."/>
        </authorList>
    </citation>
    <scope>PHOSPHORYLATION [LARGE SCALE ANALYSIS] AT SER-616</scope>
    <scope>IDENTIFICATION BY MASS SPECTROMETRY [LARGE SCALE ANALYSIS]</scope>
    <source>
        <tissue>Brain</tissue>
        <tissue>Kidney</tissue>
        <tissue>Lung</tissue>
        <tissue>Testis</tissue>
    </source>
</reference>
<reference key="5">
    <citation type="journal article" date="2014" name="Mol. Cell. Proteomics">
        <title>Immunoaffinity enrichment and mass spectrometry analysis of protein methylation.</title>
        <authorList>
            <person name="Guo A."/>
            <person name="Gu H."/>
            <person name="Zhou J."/>
            <person name="Mulhern D."/>
            <person name="Wang Y."/>
            <person name="Lee K.A."/>
            <person name="Yang V."/>
            <person name="Aguiar M."/>
            <person name="Kornhauser J."/>
            <person name="Jia X."/>
            <person name="Ren J."/>
            <person name="Beausoleil S.A."/>
            <person name="Silva J.C."/>
            <person name="Vemulapalli V."/>
            <person name="Bedford M.T."/>
            <person name="Comb M.J."/>
        </authorList>
    </citation>
    <scope>METHYLATION [LARGE SCALE ANALYSIS] AT ARG-12</scope>
    <scope>IDENTIFICATION BY MASS SPECTROMETRY [LARGE SCALE ANALYSIS]</scope>
    <source>
        <tissue>Brain</tissue>
    </source>
</reference>
<protein>
    <recommendedName>
        <fullName>Ubiquitin carboxyl-terminal hydrolase 54</fullName>
        <ecNumber evidence="2">3.4.19.12</ecNumber>
    </recommendedName>
    <alternativeName>
        <fullName>Ubiquitin-specific peptidase 54</fullName>
    </alternativeName>
</protein>
<organism>
    <name type="scientific">Mus musculus</name>
    <name type="common">Mouse</name>
    <dbReference type="NCBI Taxonomy" id="10090"/>
    <lineage>
        <taxon>Eukaryota</taxon>
        <taxon>Metazoa</taxon>
        <taxon>Chordata</taxon>
        <taxon>Craniata</taxon>
        <taxon>Vertebrata</taxon>
        <taxon>Euteleostomi</taxon>
        <taxon>Mammalia</taxon>
        <taxon>Eutheria</taxon>
        <taxon>Euarchontoglires</taxon>
        <taxon>Glires</taxon>
        <taxon>Rodentia</taxon>
        <taxon>Myomorpha</taxon>
        <taxon>Muroidea</taxon>
        <taxon>Muridae</taxon>
        <taxon>Murinae</taxon>
        <taxon>Mus</taxon>
        <taxon>Mus</taxon>
    </lineage>
</organism>
<sequence length="1588" mass="176664">MSWKRNYFSGSRGSVQGMFAPRSSMSIAPSKGLSNEPGQNSCFLNSALQVLWHLDIFRRSFRQLTTHKCMGDSCIFCALKGIFNQFQCSSEKVLPSDTLRSALAKTFQDEQRFQLGIMDDAAECFENLLMRIHFHIADETKEDICTAQHCISHQKFAMTLFEQCVCSSCGATSDPLPFIQMVHYISTTALCNQAICMLEKREKPSPSMFGELLQNASTMGDLRNCPSNCGERIRIRRVLMNAPQIITIGLVWDSEHSDLAEDVIHSLGTCLKLGDLFFRVTDDRAKQSELYLVGMICYYGKHYSTFFFQTKIRKWMYFDDAHVKEIGPKWKDVVTKCIKGHYQPLLLLYADPQGTPVSAQDLPPHAQFLPYTKTCYDSEDSGHLTDSECNQKHTSKKGSLVERRRSSGRVRRKGDEPQASGYHSEGETLKEKQAPRNASKSSSSSRLKDFKETVSNMIHSRPSLASQTSAGSPCVGRAGDQLDKIPPRNFPLQARGWETESTSSEAKSSSSSKYRPTWRPKRESLNIDSIFSKDRRKHCGYTQLRTFPEDAAKEFTPDEVSKPTANDIKDGGSRSQHKLWGTARPGSHLLEQHPRLIQRMESGYESSERNSSSPVSLDAAPPDSVNVYRDQSTKRPVGFVPSWRHIPKSHSSSILEVDCTAPMTSWTKTQPLSDGEVTSRSELDELQEEVVRRAQEQELRKKREKELEAAKGFNPHPSRYMDLDELQNQGRSDGFERSLQEANSIFEESLHLEQKGDCAAALALCNEAISKLRLTLHDASSSTHSRALVDKKLQISIRKARSLQDRMQQQASSQQPVQPSASLPSQGGALPQPTSEQPITLQVLLNQEAQLEPCKDTELGATSSFFHSPASCPELHSSLIPESPVSSVSQHSPPGTSSLKLLTSFEVDSVNRSAFHRQGLPKATGRTEMNSQHECLPLDALEDRLQGHREDNSCCSKFPPREGRDIAQDQLFEGKKNPADISMGMPWSYSTGEATSERVIYSLNSPSSSSAQPSIPPYSSCHPITSAASSPVLHAADPMQKLNQHVQAQSLQTSLTSKVVRSSEEPYRLEFPSTKGLVRSLAEQFQKMQNTSTRDVIGSQDRSLPNGVRKSSSPSDFMPPLSQGPGREHCRWVKQPRSPDGRERPPCWEDPAAHPPLSMGSGLPDGETSRTAQPRLAEPDMYQGKLPQVTDIRSKELGSSVNLGTSLPLDSWVNVTRLCDSQVKPSAPGPGDKSSSHDSHPRATCLERSPILLHPHWDQDTEQETSELESLYQASLQASSHTAYSDWRSQDVAWQPLSLAGSADGMGRRLHSAPGLDLSKPLTAEMEHVLYEPSTVPVSQDSSNVRKKTLETGHHCSSSSSLPVIHDPPVFLLDPKLYPPQPQFLSPDVLMPSMAGEPYRPPGTSRSVHQFLAMCDRDETPQGVKYTGRTLNYRSLPHRSRTDASWGPGSETNQHIGARVLTMPACKPQLTYTATLPERHQGLQVPHAQSWGNLFHSPSHPSAVHPGSPPSSNLHVPLRSTWNSGPVLGSRTPGPRRIDMPPDDDWRQSSYPSQDRHRSPGEERIMFALSNAAGREQNRVRFLQHSRW</sequence>
<keyword id="KW-0025">Alternative splicing</keyword>
<keyword id="KW-0175">Coiled coil</keyword>
<keyword id="KW-0378">Hydrolase</keyword>
<keyword id="KW-0479">Metal-binding</keyword>
<keyword id="KW-0488">Methylation</keyword>
<keyword id="KW-0597">Phosphoprotein</keyword>
<keyword id="KW-0645">Protease</keyword>
<keyword id="KW-1185">Reference proteome</keyword>
<keyword id="KW-0788">Thiol protease</keyword>
<keyword id="KW-0833">Ubl conjugation pathway</keyword>
<keyword id="KW-0862">Zinc</keyword>
<proteinExistence type="evidence at protein level"/>
<evidence type="ECO:0000250" key="1">
    <source>
        <dbReference type="UniProtKB" id="Q6IE24"/>
    </source>
</evidence>
<evidence type="ECO:0000250" key="2">
    <source>
        <dbReference type="UniProtKB" id="Q70EL1"/>
    </source>
</evidence>
<evidence type="ECO:0000255" key="3"/>
<evidence type="ECO:0000255" key="4">
    <source>
        <dbReference type="PROSITE-ProRule" id="PRU01035"/>
    </source>
</evidence>
<evidence type="ECO:0000256" key="5">
    <source>
        <dbReference type="SAM" id="MobiDB-lite"/>
    </source>
</evidence>
<evidence type="ECO:0000303" key="6">
    <source>
    </source>
</evidence>
<evidence type="ECO:0000305" key="7"/>
<evidence type="ECO:0007744" key="8">
    <source>
    </source>
</evidence>
<evidence type="ECO:0007744" key="9">
    <source>
    </source>
</evidence>
<name>UBP54_MOUSE</name>
<dbReference type="EC" id="3.4.19.12" evidence="2"/>
<dbReference type="EMBL" id="AK019588">
    <property type="protein sequence ID" value="BAB31805.1"/>
    <property type="status" value="ALT_INIT"/>
    <property type="molecule type" value="mRNA"/>
</dbReference>
<dbReference type="EMBL" id="AK036864">
    <property type="protein sequence ID" value="BAC29609.1"/>
    <property type="molecule type" value="mRNA"/>
</dbReference>
<dbReference type="EMBL" id="AK047620">
    <property type="protein sequence ID" value="BAC33102.1"/>
    <property type="molecule type" value="mRNA"/>
</dbReference>
<dbReference type="EMBL" id="AC146594">
    <property type="status" value="NOT_ANNOTATED_CDS"/>
    <property type="molecule type" value="Genomic_DNA"/>
</dbReference>
<dbReference type="EMBL" id="BC066166">
    <property type="protein sequence ID" value="AAH66166.1"/>
    <property type="molecule type" value="mRNA"/>
</dbReference>
<dbReference type="EMBL" id="BC066175">
    <property type="protein sequence ID" value="AAH66175.1"/>
    <property type="molecule type" value="mRNA"/>
</dbReference>
<dbReference type="EMBL" id="BC117844">
    <property type="protein sequence ID" value="AAI17845.1"/>
    <property type="status" value="ALT_INIT"/>
    <property type="molecule type" value="mRNA"/>
</dbReference>
<dbReference type="EMBL" id="BC117845">
    <property type="protein sequence ID" value="AAI17846.1"/>
    <property type="status" value="ALT_INIT"/>
    <property type="molecule type" value="mRNA"/>
</dbReference>
<dbReference type="CCDS" id="CCDS26847.2">
    <molecule id="Q8BL06-1"/>
</dbReference>
<dbReference type="RefSeq" id="NP_001390007.1">
    <molecule id="Q8BL06-1"/>
    <property type="nucleotide sequence ID" value="NM_001403078.1"/>
</dbReference>
<dbReference type="RefSeq" id="NP_084456.2">
    <molecule id="Q8BL06-1"/>
    <property type="nucleotide sequence ID" value="NM_030180.3"/>
</dbReference>
<dbReference type="RefSeq" id="XP_006519768.1">
    <property type="nucleotide sequence ID" value="XM_006519705.3"/>
</dbReference>
<dbReference type="SMR" id="Q8BL06"/>
<dbReference type="BioGRID" id="219632">
    <property type="interactions" value="3"/>
</dbReference>
<dbReference type="FunCoup" id="Q8BL06">
    <property type="interactions" value="166"/>
</dbReference>
<dbReference type="STRING" id="10090.ENSMUSP00000022356"/>
<dbReference type="MEROPS" id="C19.080"/>
<dbReference type="GlyGen" id="Q8BL06">
    <property type="glycosylation" value="1 site, 1 N-linked glycan (1 site)"/>
</dbReference>
<dbReference type="iPTMnet" id="Q8BL06"/>
<dbReference type="PhosphoSitePlus" id="Q8BL06"/>
<dbReference type="PaxDb" id="10090-ENSMUSP00000036214"/>
<dbReference type="PeptideAtlas" id="Q8BL06"/>
<dbReference type="ProteomicsDB" id="298367">
    <molecule id="Q8BL06-1"/>
</dbReference>
<dbReference type="ProteomicsDB" id="298368">
    <molecule id="Q8BL06-2"/>
</dbReference>
<dbReference type="ProteomicsDB" id="298369">
    <molecule id="Q8BL06-3"/>
</dbReference>
<dbReference type="Antibodypedia" id="54962">
    <property type="antibodies" value="81 antibodies from 16 providers"/>
</dbReference>
<dbReference type="DNASU" id="78787"/>
<dbReference type="Ensembl" id="ENSMUST00000022356.12">
    <molecule id="Q8BL06-1"/>
    <property type="protein sequence ID" value="ENSMUSP00000022356.5"/>
    <property type="gene ID" value="ENSMUSG00000034235.18"/>
</dbReference>
<dbReference type="Ensembl" id="ENSMUST00000035340.14">
    <molecule id="Q8BL06-1"/>
    <property type="protein sequence ID" value="ENSMUSP00000036214.8"/>
    <property type="gene ID" value="ENSMUSG00000034235.18"/>
</dbReference>
<dbReference type="GeneID" id="78787"/>
<dbReference type="KEGG" id="mmu:78787"/>
<dbReference type="UCSC" id="uc007skb.1">
    <molecule id="Q8BL06-1"/>
    <property type="organism name" value="mouse"/>
</dbReference>
<dbReference type="UCSC" id="uc007skc.1">
    <molecule id="Q8BL06-3"/>
    <property type="organism name" value="mouse"/>
</dbReference>
<dbReference type="AGR" id="MGI:1926037"/>
<dbReference type="CTD" id="159195"/>
<dbReference type="MGI" id="MGI:1926037">
    <property type="gene designation" value="Usp54"/>
</dbReference>
<dbReference type="VEuPathDB" id="HostDB:ENSMUSG00000034235"/>
<dbReference type="eggNOG" id="KOG1887">
    <property type="taxonomic scope" value="Eukaryota"/>
</dbReference>
<dbReference type="GeneTree" id="ENSGT00940000155571"/>
<dbReference type="HOGENOM" id="CLU_004234_0_0_1"/>
<dbReference type="InParanoid" id="Q8BL06"/>
<dbReference type="OMA" id="MEHILHE"/>
<dbReference type="OrthoDB" id="205782at2759"/>
<dbReference type="PhylomeDB" id="Q8BL06"/>
<dbReference type="TreeFam" id="TF336130"/>
<dbReference type="BioGRID-ORCS" id="78787">
    <property type="hits" value="8 hits in 77 CRISPR screens"/>
</dbReference>
<dbReference type="ChiTaRS" id="Usp54">
    <property type="organism name" value="mouse"/>
</dbReference>
<dbReference type="PRO" id="PR:Q8BL06"/>
<dbReference type="Proteomes" id="UP000000589">
    <property type="component" value="Chromosome 14"/>
</dbReference>
<dbReference type="RNAct" id="Q8BL06">
    <property type="molecule type" value="protein"/>
</dbReference>
<dbReference type="Bgee" id="ENSMUSG00000034235">
    <property type="expression patterns" value="Expressed in lumbar subsegment of spinal cord and 198 other cell types or tissues"/>
</dbReference>
<dbReference type="ExpressionAtlas" id="Q8BL06">
    <property type="expression patterns" value="baseline and differential"/>
</dbReference>
<dbReference type="GO" id="GO:0004843">
    <property type="term" value="F:cysteine-type deubiquitinase activity"/>
    <property type="evidence" value="ECO:0000250"/>
    <property type="project" value="UniProtKB"/>
</dbReference>
<dbReference type="GO" id="GO:0061578">
    <property type="term" value="F:K63-linked deubiquitinase activity"/>
    <property type="evidence" value="ECO:0007669"/>
    <property type="project" value="Ensembl"/>
</dbReference>
<dbReference type="GO" id="GO:0016579">
    <property type="term" value="P:protein deubiquitination"/>
    <property type="evidence" value="ECO:0007669"/>
    <property type="project" value="InterPro"/>
</dbReference>
<dbReference type="GO" id="GO:0006508">
    <property type="term" value="P:proteolysis"/>
    <property type="evidence" value="ECO:0007669"/>
    <property type="project" value="UniProtKB-KW"/>
</dbReference>
<dbReference type="CDD" id="cd02257">
    <property type="entry name" value="Peptidase_C19"/>
    <property type="match status" value="1"/>
</dbReference>
<dbReference type="FunFam" id="3.90.70.10:FF:000041">
    <property type="entry name" value="Inactive ubiquitin carboxyl-terminal hydrolase 53"/>
    <property type="match status" value="1"/>
</dbReference>
<dbReference type="Gene3D" id="3.90.70.10">
    <property type="entry name" value="Cysteine proteinases"/>
    <property type="match status" value="1"/>
</dbReference>
<dbReference type="InterPro" id="IPR052398">
    <property type="entry name" value="Inactive_ubiquitin_hydrolase"/>
</dbReference>
<dbReference type="InterPro" id="IPR038765">
    <property type="entry name" value="Papain-like_cys_pep_sf"/>
</dbReference>
<dbReference type="InterPro" id="IPR001394">
    <property type="entry name" value="Peptidase_C19_UCH"/>
</dbReference>
<dbReference type="InterPro" id="IPR028889">
    <property type="entry name" value="USP_dom"/>
</dbReference>
<dbReference type="PANTHER" id="PTHR22975:SF5">
    <property type="entry name" value="INACTIVE UBIQUITIN CARBOXYL-TERMINAL HYDROLASE 54"/>
    <property type="match status" value="1"/>
</dbReference>
<dbReference type="PANTHER" id="PTHR22975">
    <property type="entry name" value="UBIQUITIN SPECIFIC PROTEINASE"/>
    <property type="match status" value="1"/>
</dbReference>
<dbReference type="Pfam" id="PF00443">
    <property type="entry name" value="UCH"/>
    <property type="match status" value="1"/>
</dbReference>
<dbReference type="SUPFAM" id="SSF54001">
    <property type="entry name" value="Cysteine proteinases"/>
    <property type="match status" value="1"/>
</dbReference>
<dbReference type="PROSITE" id="PS50235">
    <property type="entry name" value="USP_3"/>
    <property type="match status" value="1"/>
</dbReference>
<gene>
    <name type="primary">Usp54</name>
</gene>
<accession>Q8BL06</accession>
<accession>Q149D8</accession>
<accession>Q149D9</accession>
<accession>Q6NZE1</accession>
<accession>Q8BZ28</accession>
<accession>Q9D2I9</accession>
<comment type="function">
    <text evidence="2">Deubiquitinase that specifically mediates 'Lys-63'-linked deubiquitination of substrates with a polyubiquitin chain composed of at least 3 ubiquitins. Specifically recognizes ubiquitin chain in position S2 and catalyzes cleavage of polyubiquitin within 'Lys-63'-linked chains. Not able to deubiquitinate substrates with shorter ubiquitin chains. Mediates deubiquitination of PLK4, maintaining PLK4 stability by reducing its ubiquitination-mediated degradation.</text>
</comment>
<comment type="catalytic activity">
    <reaction evidence="2">
        <text>Thiol-dependent hydrolysis of ester, thioester, amide, peptide and isopeptide bonds formed by the C-terminal Gly of ubiquitin (a 76-residue protein attached to proteins as an intracellular targeting signal).</text>
        <dbReference type="EC" id="3.4.19.12"/>
    </reaction>
</comment>
<comment type="alternative products">
    <event type="alternative splicing"/>
    <isoform>
        <id>Q8BL06-1</id>
        <name>1</name>
        <sequence type="displayed"/>
    </isoform>
    <isoform>
        <id>Q8BL06-2</id>
        <name>2</name>
        <sequence type="described" ref="VSP_020488 VSP_035679 VSP_035680"/>
    </isoform>
    <isoform>
        <id>Q8BL06-3</id>
        <name>3</name>
        <sequence type="described" ref="VSP_035679 VSP_035680"/>
    </isoform>
</comment>
<comment type="similarity">
    <text evidence="4">Belongs to the peptidase C19 family.</text>
</comment>
<comment type="sequence caution" evidence="7">
    <conflict type="erroneous initiation">
        <sequence resource="EMBL-CDS" id="AAI17845"/>
    </conflict>
</comment>
<comment type="sequence caution" evidence="7">
    <conflict type="erroneous initiation">
        <sequence resource="EMBL-CDS" id="AAI17846"/>
    </conflict>
</comment>
<comment type="sequence caution" evidence="7">
    <conflict type="erroneous initiation">
        <sequence resource="EMBL-CDS" id="BAB31805"/>
    </conflict>
</comment>